<reference key="1">
    <citation type="journal article" date="2004" name="Science">
        <title>Illuminating the evolutionary history of chlamydiae.</title>
        <authorList>
            <person name="Horn M."/>
            <person name="Collingro A."/>
            <person name="Schmitz-Esser S."/>
            <person name="Beier C.L."/>
            <person name="Purkhold U."/>
            <person name="Fartmann B."/>
            <person name="Brandt P."/>
            <person name="Nyakatura G.J."/>
            <person name="Droege M."/>
            <person name="Frishman D."/>
            <person name="Rattei T."/>
            <person name="Mewes H.-W."/>
            <person name="Wagner M."/>
        </authorList>
    </citation>
    <scope>NUCLEOTIDE SEQUENCE [LARGE SCALE GENOMIC DNA]</scope>
    <source>
        <strain>UWE25</strain>
    </source>
</reference>
<gene>
    <name evidence="1" type="primary">rpsD</name>
    <name type="ordered locus">pc1367</name>
</gene>
<protein>
    <recommendedName>
        <fullName evidence="1">Small ribosomal subunit protein uS4</fullName>
    </recommendedName>
    <alternativeName>
        <fullName evidence="2">30S ribosomal protein S4</fullName>
    </alternativeName>
</protein>
<organism>
    <name type="scientific">Protochlamydia amoebophila (strain UWE25)</name>
    <dbReference type="NCBI Taxonomy" id="264201"/>
    <lineage>
        <taxon>Bacteria</taxon>
        <taxon>Pseudomonadati</taxon>
        <taxon>Chlamydiota</taxon>
        <taxon>Chlamydiia</taxon>
        <taxon>Parachlamydiales</taxon>
        <taxon>Parachlamydiaceae</taxon>
        <taxon>Candidatus Protochlamydia</taxon>
    </lineage>
</organism>
<sequence length="206" mass="23427">MARYTGSKNRIARRYGVNIFGRARNPLLHKPNPPGVHGARRRKKSDFGLQLEEKQKLKAIYGMLSEKQLVAYYKKALRLEGNTASHFAEMLECRLDNLVYRLKFGHTIFAAQQLVAHGHILVDGKKVDRRSFQVKPGMVISIKEKSRKIKIIAEALDNPARSVPEYLSSDKEHFSGQLLAKPIPEQMPWPIEISLPVICDFLAHST</sequence>
<evidence type="ECO:0000255" key="1">
    <source>
        <dbReference type="HAMAP-Rule" id="MF_01306"/>
    </source>
</evidence>
<evidence type="ECO:0000305" key="2"/>
<proteinExistence type="inferred from homology"/>
<dbReference type="EMBL" id="BX908798">
    <property type="protein sequence ID" value="CAF24091.1"/>
    <property type="molecule type" value="Genomic_DNA"/>
</dbReference>
<dbReference type="RefSeq" id="WP_011175916.1">
    <property type="nucleotide sequence ID" value="NC_005861.2"/>
</dbReference>
<dbReference type="SMR" id="Q6MBF8"/>
<dbReference type="STRING" id="264201.pc1367"/>
<dbReference type="KEGG" id="pcu:PC_RS06560"/>
<dbReference type="eggNOG" id="COG0522">
    <property type="taxonomic scope" value="Bacteria"/>
</dbReference>
<dbReference type="HOGENOM" id="CLU_092403_0_1_0"/>
<dbReference type="OrthoDB" id="9803672at2"/>
<dbReference type="Proteomes" id="UP000000529">
    <property type="component" value="Chromosome"/>
</dbReference>
<dbReference type="GO" id="GO:0015935">
    <property type="term" value="C:small ribosomal subunit"/>
    <property type="evidence" value="ECO:0007669"/>
    <property type="project" value="InterPro"/>
</dbReference>
<dbReference type="GO" id="GO:0019843">
    <property type="term" value="F:rRNA binding"/>
    <property type="evidence" value="ECO:0007669"/>
    <property type="project" value="UniProtKB-UniRule"/>
</dbReference>
<dbReference type="GO" id="GO:0003735">
    <property type="term" value="F:structural constituent of ribosome"/>
    <property type="evidence" value="ECO:0007669"/>
    <property type="project" value="InterPro"/>
</dbReference>
<dbReference type="GO" id="GO:0042274">
    <property type="term" value="P:ribosomal small subunit biogenesis"/>
    <property type="evidence" value="ECO:0007669"/>
    <property type="project" value="TreeGrafter"/>
</dbReference>
<dbReference type="GO" id="GO:0006412">
    <property type="term" value="P:translation"/>
    <property type="evidence" value="ECO:0007669"/>
    <property type="project" value="UniProtKB-UniRule"/>
</dbReference>
<dbReference type="CDD" id="cd00165">
    <property type="entry name" value="S4"/>
    <property type="match status" value="1"/>
</dbReference>
<dbReference type="FunFam" id="3.10.290.10:FF:000001">
    <property type="entry name" value="30S ribosomal protein S4"/>
    <property type="match status" value="1"/>
</dbReference>
<dbReference type="Gene3D" id="1.10.1050.10">
    <property type="entry name" value="Ribosomal Protein S4 Delta 41, Chain A, domain 1"/>
    <property type="match status" value="1"/>
</dbReference>
<dbReference type="Gene3D" id="3.10.290.10">
    <property type="entry name" value="RNA-binding S4 domain"/>
    <property type="match status" value="1"/>
</dbReference>
<dbReference type="HAMAP" id="MF_01306_B">
    <property type="entry name" value="Ribosomal_uS4_B"/>
    <property type="match status" value="1"/>
</dbReference>
<dbReference type="InterPro" id="IPR022801">
    <property type="entry name" value="Ribosomal_uS4"/>
</dbReference>
<dbReference type="InterPro" id="IPR005709">
    <property type="entry name" value="Ribosomal_uS4_bac-type"/>
</dbReference>
<dbReference type="InterPro" id="IPR018079">
    <property type="entry name" value="Ribosomal_uS4_CS"/>
</dbReference>
<dbReference type="InterPro" id="IPR001912">
    <property type="entry name" value="Ribosomal_uS4_N"/>
</dbReference>
<dbReference type="InterPro" id="IPR002942">
    <property type="entry name" value="S4_RNA-bd"/>
</dbReference>
<dbReference type="InterPro" id="IPR036986">
    <property type="entry name" value="S4_RNA-bd_sf"/>
</dbReference>
<dbReference type="NCBIfam" id="NF003717">
    <property type="entry name" value="PRK05327.1"/>
    <property type="match status" value="1"/>
</dbReference>
<dbReference type="NCBIfam" id="TIGR01017">
    <property type="entry name" value="rpsD_bact"/>
    <property type="match status" value="1"/>
</dbReference>
<dbReference type="PANTHER" id="PTHR11831">
    <property type="entry name" value="30S 40S RIBOSOMAL PROTEIN"/>
    <property type="match status" value="1"/>
</dbReference>
<dbReference type="PANTHER" id="PTHR11831:SF4">
    <property type="entry name" value="SMALL RIBOSOMAL SUBUNIT PROTEIN US4M"/>
    <property type="match status" value="1"/>
</dbReference>
<dbReference type="Pfam" id="PF00163">
    <property type="entry name" value="Ribosomal_S4"/>
    <property type="match status" value="1"/>
</dbReference>
<dbReference type="Pfam" id="PF01479">
    <property type="entry name" value="S4"/>
    <property type="match status" value="1"/>
</dbReference>
<dbReference type="SMART" id="SM01390">
    <property type="entry name" value="Ribosomal_S4"/>
    <property type="match status" value="1"/>
</dbReference>
<dbReference type="SMART" id="SM00363">
    <property type="entry name" value="S4"/>
    <property type="match status" value="1"/>
</dbReference>
<dbReference type="SUPFAM" id="SSF55174">
    <property type="entry name" value="Alpha-L RNA-binding motif"/>
    <property type="match status" value="1"/>
</dbReference>
<dbReference type="PROSITE" id="PS00632">
    <property type="entry name" value="RIBOSOMAL_S4"/>
    <property type="match status" value="1"/>
</dbReference>
<dbReference type="PROSITE" id="PS50889">
    <property type="entry name" value="S4"/>
    <property type="match status" value="1"/>
</dbReference>
<accession>Q6MBF8</accession>
<comment type="function">
    <text evidence="1">One of the primary rRNA binding proteins, it binds directly to 16S rRNA where it nucleates assembly of the body of the 30S subunit.</text>
</comment>
<comment type="function">
    <text evidence="1">With S5 and S12 plays an important role in translational accuracy.</text>
</comment>
<comment type="subunit">
    <text evidence="1">Part of the 30S ribosomal subunit. Contacts protein S5. The interaction surface between S4 and S5 is involved in control of translational fidelity.</text>
</comment>
<comment type="similarity">
    <text evidence="1">Belongs to the universal ribosomal protein uS4 family.</text>
</comment>
<name>RS4_PARUW</name>
<feature type="chain" id="PRO_0000132429" description="Small ribosomal subunit protein uS4">
    <location>
        <begin position="1"/>
        <end position="206"/>
    </location>
</feature>
<feature type="domain" description="S4 RNA-binding" evidence="1">
    <location>
        <begin position="93"/>
        <end position="156"/>
    </location>
</feature>
<keyword id="KW-1185">Reference proteome</keyword>
<keyword id="KW-0687">Ribonucleoprotein</keyword>
<keyword id="KW-0689">Ribosomal protein</keyword>
<keyword id="KW-0694">RNA-binding</keyword>
<keyword id="KW-0699">rRNA-binding</keyword>